<reference key="1">
    <citation type="journal article" date="2001" name="Gene">
        <title>Identification of two novel human dynein light chain genes, DNLC2A and DNLC2B, and their expression changes in hepatocellular carcinoma tissues from 68 Chinese patients.</title>
        <authorList>
            <person name="Jiang J."/>
            <person name="Yu L."/>
            <person name="Huang X."/>
            <person name="Chen X."/>
            <person name="Li D."/>
            <person name="Zhang Y."/>
            <person name="Tang L."/>
            <person name="Zhao S."/>
        </authorList>
    </citation>
    <scope>NUCLEOTIDE SEQUENCE [MRNA] (ISOFORM 1)</scope>
    <scope>TISSUE SPECIFICITY</scope>
    <source>
        <tissue>Liver</tissue>
        <tissue>Testis</tissue>
    </source>
</reference>
<reference key="2">
    <citation type="submission" date="1999-07" db="EMBL/GenBank/DDBJ databases">
        <title>Novel genes expressed in hematopoietic stem/progenitor cells from myelodysplastic syndrome patients.</title>
        <authorList>
            <person name="Gu J."/>
            <person name="Huang Q."/>
            <person name="Yu Y."/>
            <person name="Xu S."/>
            <person name="Han Z."/>
            <person name="Fu G."/>
            <person name="Zhou J."/>
            <person name="Wang Y."/>
            <person name="Huang C."/>
            <person name="Ren S."/>
            <person name="Tu Y."/>
            <person name="Chen Z."/>
        </authorList>
    </citation>
    <scope>NUCLEOTIDE SEQUENCE [LARGE SCALE MRNA] (ISOFORM 1)</scope>
    <source>
        <tissue>Hematopoietic stem cell</tissue>
    </source>
</reference>
<reference key="3">
    <citation type="submission" date="1999-08" db="EMBL/GenBank/DDBJ databases">
        <title>BitH, a human homolog of bithorax Drosophila melanogaster gene, on chromosome 20q.</title>
        <authorList>
            <person name="Fracchiolla N.S."/>
            <person name="Cortelezzi A."/>
            <person name="Lambertenghi-Deliliers G."/>
        </authorList>
    </citation>
    <scope>NUCLEOTIDE SEQUENCE [MRNA] (ISOFORM 1)</scope>
</reference>
<reference key="4">
    <citation type="submission" date="2001-01" db="EMBL/GenBank/DDBJ databases">
        <title>Km23: role in growth factor signaling.</title>
        <authorList>
            <person name="Tang Q."/>
            <person name="Staub C.M."/>
            <person name="Mulder K.M."/>
        </authorList>
    </citation>
    <scope>NUCLEOTIDE SEQUENCE [MRNA] (ISOFORM 1)</scope>
    <source>
        <tissue>Placenta</tissue>
    </source>
</reference>
<reference key="5">
    <citation type="journal article" date="2000" name="Genome Res.">
        <title>Cloning and functional analysis of cDNAs with open reading frames for 300 previously undefined genes expressed in CD34+ hematopoietic stem/progenitor cells.</title>
        <authorList>
            <person name="Zhang Q.-H."/>
            <person name="Ye M."/>
            <person name="Wu X.-Y."/>
            <person name="Ren S.-X."/>
            <person name="Zhao M."/>
            <person name="Zhao C.-J."/>
            <person name="Fu G."/>
            <person name="Shen Y."/>
            <person name="Fan H.-Y."/>
            <person name="Lu G."/>
            <person name="Zhong M."/>
            <person name="Xu X.-R."/>
            <person name="Han Z.-G."/>
            <person name="Zhang J.-W."/>
            <person name="Tao J."/>
            <person name="Huang Q.-H."/>
            <person name="Zhou J."/>
            <person name="Hu G.-X."/>
            <person name="Gu J."/>
            <person name="Chen S.-J."/>
            <person name="Chen Z."/>
        </authorList>
    </citation>
    <scope>NUCLEOTIDE SEQUENCE [LARGE SCALE MRNA] (ISOFORM 1)</scope>
    <source>
        <tissue>Umbilical cord blood</tissue>
    </source>
</reference>
<reference key="6">
    <citation type="journal article" date="2001" name="Nature">
        <title>The DNA sequence and comparative analysis of human chromosome 20.</title>
        <authorList>
            <person name="Deloukas P."/>
            <person name="Matthews L.H."/>
            <person name="Ashurst J.L."/>
            <person name="Burton J."/>
            <person name="Gilbert J.G.R."/>
            <person name="Jones M."/>
            <person name="Stavrides G."/>
            <person name="Almeida J.P."/>
            <person name="Babbage A.K."/>
            <person name="Bagguley C.L."/>
            <person name="Bailey J."/>
            <person name="Barlow K.F."/>
            <person name="Bates K.N."/>
            <person name="Beard L.M."/>
            <person name="Beare D.M."/>
            <person name="Beasley O.P."/>
            <person name="Bird C.P."/>
            <person name="Blakey S.E."/>
            <person name="Bridgeman A.M."/>
            <person name="Brown A.J."/>
            <person name="Buck D."/>
            <person name="Burrill W.D."/>
            <person name="Butler A.P."/>
            <person name="Carder C."/>
            <person name="Carter N.P."/>
            <person name="Chapman J.C."/>
            <person name="Clamp M."/>
            <person name="Clark G."/>
            <person name="Clark L.N."/>
            <person name="Clark S.Y."/>
            <person name="Clee C.M."/>
            <person name="Clegg S."/>
            <person name="Cobley V.E."/>
            <person name="Collier R.E."/>
            <person name="Connor R.E."/>
            <person name="Corby N.R."/>
            <person name="Coulson A."/>
            <person name="Coville G.J."/>
            <person name="Deadman R."/>
            <person name="Dhami P.D."/>
            <person name="Dunn M."/>
            <person name="Ellington A.G."/>
            <person name="Frankland J.A."/>
            <person name="Fraser A."/>
            <person name="French L."/>
            <person name="Garner P."/>
            <person name="Grafham D.V."/>
            <person name="Griffiths C."/>
            <person name="Griffiths M.N.D."/>
            <person name="Gwilliam R."/>
            <person name="Hall R.E."/>
            <person name="Hammond S."/>
            <person name="Harley J.L."/>
            <person name="Heath P.D."/>
            <person name="Ho S."/>
            <person name="Holden J.L."/>
            <person name="Howden P.J."/>
            <person name="Huckle E."/>
            <person name="Hunt A.R."/>
            <person name="Hunt S.E."/>
            <person name="Jekosch K."/>
            <person name="Johnson C.M."/>
            <person name="Johnson D."/>
            <person name="Kay M.P."/>
            <person name="Kimberley A.M."/>
            <person name="King A."/>
            <person name="Knights A."/>
            <person name="Laird G.K."/>
            <person name="Lawlor S."/>
            <person name="Lehvaeslaiho M.H."/>
            <person name="Leversha M.A."/>
            <person name="Lloyd C."/>
            <person name="Lloyd D.M."/>
            <person name="Lovell J.D."/>
            <person name="Marsh V.L."/>
            <person name="Martin S.L."/>
            <person name="McConnachie L.J."/>
            <person name="McLay K."/>
            <person name="McMurray A.A."/>
            <person name="Milne S.A."/>
            <person name="Mistry D."/>
            <person name="Moore M.J.F."/>
            <person name="Mullikin J.C."/>
            <person name="Nickerson T."/>
            <person name="Oliver K."/>
            <person name="Parker A."/>
            <person name="Patel R."/>
            <person name="Pearce T.A.V."/>
            <person name="Peck A.I."/>
            <person name="Phillimore B.J.C.T."/>
            <person name="Prathalingam S.R."/>
            <person name="Plumb R.W."/>
            <person name="Ramsay H."/>
            <person name="Rice C.M."/>
            <person name="Ross M.T."/>
            <person name="Scott C.E."/>
            <person name="Sehra H.K."/>
            <person name="Shownkeen R."/>
            <person name="Sims S."/>
            <person name="Skuce C.D."/>
            <person name="Smith M.L."/>
            <person name="Soderlund C."/>
            <person name="Steward C.A."/>
            <person name="Sulston J.E."/>
            <person name="Swann R.M."/>
            <person name="Sycamore N."/>
            <person name="Taylor R."/>
            <person name="Tee L."/>
            <person name="Thomas D.W."/>
            <person name="Thorpe A."/>
            <person name="Tracey A."/>
            <person name="Tromans A.C."/>
            <person name="Vaudin M."/>
            <person name="Wall M."/>
            <person name="Wallis J.M."/>
            <person name="Whitehead S.L."/>
            <person name="Whittaker P."/>
            <person name="Willey D.L."/>
            <person name="Williams L."/>
            <person name="Williams S.A."/>
            <person name="Wilming L."/>
            <person name="Wray P.W."/>
            <person name="Hubbard T."/>
            <person name="Durbin R.M."/>
            <person name="Bentley D.R."/>
            <person name="Beck S."/>
            <person name="Rogers J."/>
        </authorList>
    </citation>
    <scope>NUCLEOTIDE SEQUENCE [LARGE SCALE GENOMIC DNA]</scope>
</reference>
<reference key="7">
    <citation type="journal article" date="2004" name="Genome Res.">
        <title>The status, quality, and expansion of the NIH full-length cDNA project: the Mammalian Gene Collection (MGC).</title>
        <authorList>
            <consortium name="The MGC Project Team"/>
        </authorList>
    </citation>
    <scope>NUCLEOTIDE SEQUENCE [LARGE SCALE MRNA] (ISOFORMS 1 AND 2)</scope>
    <source>
        <tissue>Kidney</tissue>
        <tissue>Lymph</tissue>
    </source>
</reference>
<reference key="8">
    <citation type="journal article" date="2003" name="Nat. Biotechnol.">
        <title>Exploring proteomes and analyzing protein processing by mass spectrometric identification of sorted N-terminal peptides.</title>
        <authorList>
            <person name="Gevaert K."/>
            <person name="Goethals M."/>
            <person name="Martens L."/>
            <person name="Van Damme J."/>
            <person name="Staes A."/>
            <person name="Thomas G.R."/>
            <person name="Vandekerckhove J."/>
        </authorList>
    </citation>
    <scope>PROTEIN SEQUENCE OF 2-10</scope>
    <source>
        <tissue>Platelet</tissue>
    </source>
</reference>
<reference key="9">
    <citation type="submission" date="2008-12" db="UniProtKB">
        <authorList>
            <person name="Lubec G."/>
            <person name="Chen W.-Q."/>
            <person name="Sun Y."/>
        </authorList>
    </citation>
    <scope>PROTEIN SEQUENCE OF 16-52 AND 59-70</scope>
    <scope>IDENTIFICATION BY MASS SPECTROMETRY</scope>
    <source>
        <tissue>Fetal brain cortex</tissue>
    </source>
</reference>
<reference key="10">
    <citation type="journal article" date="2002" name="J. Biol. Chem.">
        <title>The roadblock light chain binds a novel region of the cytoplasmic Dynein intermediate chain.</title>
        <authorList>
            <person name="Susalka S.J."/>
            <person name="Nikulina K."/>
            <person name="Salata M.W."/>
            <person name="Vaughan P.S."/>
            <person name="King S.M."/>
            <person name="Vaughan K.T."/>
            <person name="Pfister K.K."/>
        </authorList>
    </citation>
    <scope>INTERACTION WITH DYNC1I1 AND DYNC1I2</scope>
</reference>
<reference key="11">
    <citation type="journal article" date="2008" name="Cell Motil. Cytoskeleton">
        <title>Rab6 family proteins interact with the dynein light chain protein DYNLRB1.</title>
        <authorList>
            <person name="Wanschers B.F.J."/>
            <person name="van de Vorstenbosch R."/>
            <person name="Wijers M."/>
            <person name="Wieringa B."/>
            <person name="King S.M."/>
            <person name="Fransen J."/>
        </authorList>
    </citation>
    <scope>INTERACTION WITH RAP6A AND RAP6B</scope>
</reference>
<reference key="12">
    <citation type="journal article" date="2011" name="BMC Syst. Biol.">
        <title>Initial characterization of the human central proteome.</title>
        <authorList>
            <person name="Burkard T.R."/>
            <person name="Planyavsky M."/>
            <person name="Kaupe I."/>
            <person name="Breitwieser F.P."/>
            <person name="Buerckstuemmer T."/>
            <person name="Bennett K.L."/>
            <person name="Superti-Furga G."/>
            <person name="Colinge J."/>
        </authorList>
    </citation>
    <scope>IDENTIFICATION BY MASS SPECTROMETRY [LARGE SCALE ANALYSIS]</scope>
</reference>
<reference key="13">
    <citation type="journal article" date="2015" name="Proteomics">
        <title>N-terminome analysis of the human mitochondrial proteome.</title>
        <authorList>
            <person name="Vaca Jacome A.S."/>
            <person name="Rabilloud T."/>
            <person name="Schaeffer-Reiss C."/>
            <person name="Rompais M."/>
            <person name="Ayoub D."/>
            <person name="Lane L."/>
            <person name="Bairoch A."/>
            <person name="Van Dorsselaer A."/>
            <person name="Carapito C."/>
        </authorList>
    </citation>
    <scope>IDENTIFICATION BY MASS SPECTROMETRY [LARGE SCALE ANALYSIS]</scope>
</reference>
<reference key="14">
    <citation type="journal article" date="2005" name="J. Mol. Biol.">
        <title>Structure and dynamics of the homodimeric dynein light chain km23.</title>
        <authorList>
            <person name="Ilangovan U."/>
            <person name="Ding W."/>
            <person name="Zhong Y."/>
            <person name="Wilson C.L."/>
            <person name="Groppe J.C."/>
            <person name="Trbovich J.T."/>
            <person name="Zuniga J."/>
            <person name="Demeler B."/>
            <person name="Tang Q."/>
            <person name="Gao G."/>
            <person name="Mulder K.M."/>
            <person name="Hinck A.P."/>
        </authorList>
    </citation>
    <scope>STRUCTURE BY NMR</scope>
    <scope>SUBUNIT</scope>
</reference>
<reference key="15">
    <citation type="journal article" date="2006" name="Biochem. Biophys. Res. Commun.">
        <title>Crystal structure of human dynein light chain Dnlc2A: structural insights into the interaction with IC74.</title>
        <authorList>
            <person name="Liu J.F."/>
            <person name="Wang Z.X."/>
            <person name="Wang X.Q."/>
            <person name="Tang Q."/>
            <person name="An X.M."/>
            <person name="Gui L.L."/>
            <person name="Liang D.C."/>
        </authorList>
    </citation>
    <scope>X-RAY CRYSTALLOGRAPHY (2.1 ANGSTROMS)</scope>
    <scope>SUBUNIT</scope>
</reference>
<reference evidence="14 15 16 17" key="16">
    <citation type="journal article" date="2018" name="Nature">
        <title>Cryo-EM shows how dynactin recruits two dyneins for faster movement.</title>
        <authorList>
            <person name="Urnavicius L."/>
            <person name="Lau C.K."/>
            <person name="Elshenawy M.M."/>
            <person name="Morales-Rios E."/>
            <person name="Motz C."/>
            <person name="Yildiz A."/>
            <person name="Carter A.P."/>
        </authorList>
    </citation>
    <scope>STRUCTURE BY ELECTRON MICROSCOPY (3.40 ANGSTROMS)</scope>
    <scope>SUBUNIT</scope>
</reference>
<reference evidence="18" key="17">
    <citation type="journal article" date="2022" name="Nature">
        <title>Structure of dynein-dynactin on microtubules shows tandem adaptor binding.</title>
        <authorList>
            <person name="Chaaban S."/>
            <person name="Carter A.P."/>
        </authorList>
    </citation>
    <scope>STRUCTURE BY ELECTRON MICROSCOPY (20.00 ANGSTROMS)</scope>
    <scope>SUBUNIT</scope>
</reference>
<feature type="initiator methionine" description="Removed" evidence="1 4">
    <location>
        <position position="1"/>
    </location>
</feature>
<feature type="chain" id="PRO_0000220955" description="Dynein light chain roadblock-type 1">
    <location>
        <begin position="2"/>
        <end position="96"/>
    </location>
</feature>
<feature type="modified residue" description="N-acetylalanine" evidence="1">
    <location>
        <position position="2"/>
    </location>
</feature>
<feature type="splice variant" id="VSP_007236" description="In isoform 2." evidence="10">
    <original>IPIKSTMDNPTTTQYASLMH</original>
    <variation>GWEPLGHCGDRSRPPAQGCP</variation>
    <location>
        <begin position="28"/>
        <end position="47"/>
    </location>
</feature>
<feature type="splice variant" id="VSP_007237" description="In isoform 2." evidence="10">
    <location>
        <begin position="48"/>
        <end position="96"/>
    </location>
</feature>
<feature type="sequence variant" id="VAR_049124" description="In dbSNP:rs1063616.">
    <original>S</original>
    <variation>R</variation>
    <location>
        <position position="13"/>
    </location>
</feature>
<feature type="sequence variant" id="VAR_049125" description="In dbSNP:rs10036.">
    <original>I</original>
    <variation>F</variation>
    <location>
        <position position="71"/>
    </location>
</feature>
<feature type="helix" evidence="19">
    <location>
        <begin position="6"/>
        <end position="12"/>
    </location>
</feature>
<feature type="strand" evidence="20">
    <location>
        <begin position="14"/>
        <end position="16"/>
    </location>
</feature>
<feature type="strand" evidence="19">
    <location>
        <begin position="17"/>
        <end position="23"/>
    </location>
</feature>
<feature type="strand" evidence="21">
    <location>
        <begin position="25"/>
        <end position="27"/>
    </location>
</feature>
<feature type="strand" evidence="19">
    <location>
        <begin position="29"/>
        <end position="34"/>
    </location>
</feature>
<feature type="helix" evidence="19">
    <location>
        <begin position="36"/>
        <end position="60"/>
    </location>
</feature>
<feature type="strand" evidence="19">
    <location>
        <begin position="66"/>
        <end position="75"/>
    </location>
</feature>
<feature type="strand" evidence="19">
    <location>
        <begin position="77"/>
        <end position="81"/>
    </location>
</feature>
<feature type="strand" evidence="19">
    <location>
        <begin position="87"/>
        <end position="92"/>
    </location>
</feature>
<keyword id="KW-0002">3D-structure</keyword>
<keyword id="KW-0007">Acetylation</keyword>
<keyword id="KW-0025">Alternative splicing</keyword>
<keyword id="KW-0963">Cytoplasm</keyword>
<keyword id="KW-0206">Cytoskeleton</keyword>
<keyword id="KW-0903">Direct protein sequencing</keyword>
<keyword id="KW-0243">Dynein</keyword>
<keyword id="KW-0493">Microtubule</keyword>
<keyword id="KW-0505">Motor protein</keyword>
<keyword id="KW-1267">Proteomics identification</keyword>
<keyword id="KW-1185">Reference proteome</keyword>
<keyword id="KW-0813">Transport</keyword>
<name>DLRB1_HUMAN</name>
<accession>Q9NP97</accession>
<accession>B1AKR5</accession>
<accession>Q5TC72</accession>
<accession>Q96IV3</accession>
<accession>Q9NQM2</accession>
<evidence type="ECO:0000250" key="1">
    <source>
        <dbReference type="UniProtKB" id="P62628"/>
    </source>
</evidence>
<evidence type="ECO:0000269" key="2">
    <source>
    </source>
</evidence>
<evidence type="ECO:0000269" key="3">
    <source>
    </source>
</evidence>
<evidence type="ECO:0000269" key="4">
    <source>
    </source>
</evidence>
<evidence type="ECO:0000269" key="5">
    <source>
    </source>
</evidence>
<evidence type="ECO:0000269" key="6">
    <source>
    </source>
</evidence>
<evidence type="ECO:0000269" key="7">
    <source>
    </source>
</evidence>
<evidence type="ECO:0000269" key="8">
    <source>
    </source>
</evidence>
<evidence type="ECO:0000269" key="9">
    <source>
    </source>
</evidence>
<evidence type="ECO:0000303" key="10">
    <source>
    </source>
</evidence>
<evidence type="ECO:0000305" key="11"/>
<evidence type="ECO:0000305" key="12">
    <source>
    </source>
</evidence>
<evidence type="ECO:0000312" key="13">
    <source>
        <dbReference type="HGNC" id="HGNC:15468"/>
    </source>
</evidence>
<evidence type="ECO:0007744" key="14">
    <source>
        <dbReference type="PDB" id="6F1T"/>
    </source>
</evidence>
<evidence type="ECO:0007744" key="15">
    <source>
        <dbReference type="PDB" id="6F1Z"/>
    </source>
</evidence>
<evidence type="ECO:0007744" key="16">
    <source>
        <dbReference type="PDB" id="6F38"/>
    </source>
</evidence>
<evidence type="ECO:0007744" key="17">
    <source>
        <dbReference type="PDB" id="6F3A"/>
    </source>
</evidence>
<evidence type="ECO:0007744" key="18">
    <source>
        <dbReference type="PDB" id="7Z8F"/>
    </source>
</evidence>
<evidence type="ECO:0007829" key="19">
    <source>
        <dbReference type="PDB" id="2HZ5"/>
    </source>
</evidence>
<evidence type="ECO:0007829" key="20">
    <source>
        <dbReference type="PDB" id="6F1T"/>
    </source>
</evidence>
<evidence type="ECO:0007829" key="21">
    <source>
        <dbReference type="PDB" id="6F1Z"/>
    </source>
</evidence>
<protein>
    <recommendedName>
        <fullName>Dynein light chain roadblock-type 1</fullName>
    </recommendedName>
    <alternativeName>
        <fullName>Bithoraxoid-like protein</fullName>
        <shortName>BLP</shortName>
    </alternativeName>
    <alternativeName>
        <fullName>Dynein light chain 2A, cytoplasmic</fullName>
    </alternativeName>
    <alternativeName>
        <fullName>Dynein-associated protein Km23</fullName>
    </alternativeName>
    <alternativeName>
        <fullName>Roadblock domain-containing protein 1</fullName>
    </alternativeName>
</protein>
<gene>
    <name evidence="13" type="primary">DYNLRB1</name>
    <name type="synonym">BITH</name>
    <name type="synonym">DNCL2A</name>
    <name type="synonym">DNLC2A</name>
    <name type="synonym">ROBLD1</name>
    <name type="ORF">HSPC162</name>
</gene>
<sequence>MAEVEETLKRLQSQKGVQGIIVVNTEGIPIKSTMDNPTTTQYASLMHSFILKARSTVRDIDPQNDLTFLRIRSKKNEIMVAPDKDYFLIVIQNPTE</sequence>
<proteinExistence type="evidence at protein level"/>
<dbReference type="EMBL" id="AF132750">
    <property type="protein sequence ID" value="AAL75951.1"/>
    <property type="molecule type" value="mRNA"/>
</dbReference>
<dbReference type="EMBL" id="AF165516">
    <property type="protein sequence ID" value="AAF86646.1"/>
    <property type="molecule type" value="mRNA"/>
</dbReference>
<dbReference type="EMBL" id="AF178431">
    <property type="protein sequence ID" value="AAK95342.1"/>
    <property type="molecule type" value="mRNA"/>
</dbReference>
<dbReference type="EMBL" id="AY026513">
    <property type="protein sequence ID" value="AAK18712.1"/>
    <property type="molecule type" value="mRNA"/>
</dbReference>
<dbReference type="EMBL" id="AF161511">
    <property type="protein sequence ID" value="AAF29126.1"/>
    <property type="molecule type" value="mRNA"/>
</dbReference>
<dbReference type="EMBL" id="AL109923">
    <property type="status" value="NOT_ANNOTATED_CDS"/>
    <property type="molecule type" value="Genomic_DNA"/>
</dbReference>
<dbReference type="EMBL" id="AL136173">
    <property type="status" value="NOT_ANNOTATED_CDS"/>
    <property type="molecule type" value="Genomic_DNA"/>
</dbReference>
<dbReference type="EMBL" id="BC002481">
    <property type="protein sequence ID" value="AAH02481.1"/>
    <property type="molecule type" value="mRNA"/>
</dbReference>
<dbReference type="EMBL" id="BC007223">
    <property type="status" value="NOT_ANNOTATED_CDS"/>
    <property type="molecule type" value="mRNA"/>
</dbReference>
<dbReference type="CCDS" id="CCDS13235.1">
    <molecule id="Q9NP97-1"/>
</dbReference>
<dbReference type="RefSeq" id="NP_001268656.1">
    <property type="nucleotide sequence ID" value="NM_001281727.1"/>
</dbReference>
<dbReference type="RefSeq" id="NP_001268657.1">
    <property type="nucleotide sequence ID" value="NM_001281728.1"/>
</dbReference>
<dbReference type="RefSeq" id="NP_001268658.1">
    <property type="nucleotide sequence ID" value="NM_001281729.1"/>
</dbReference>
<dbReference type="RefSeq" id="NP_001369294.1">
    <molecule id="Q9NP97-1"/>
    <property type="nucleotide sequence ID" value="NM_001382365.1"/>
</dbReference>
<dbReference type="RefSeq" id="NP_054902.1">
    <molecule id="Q9NP97-1"/>
    <property type="nucleotide sequence ID" value="NM_014183.4"/>
</dbReference>
<dbReference type="RefSeq" id="NP_808852.1">
    <property type="nucleotide sequence ID" value="NM_177953.2"/>
</dbReference>
<dbReference type="PDB" id="1Z09">
    <property type="method" value="NMR"/>
    <property type="chains" value="A/B=1-96"/>
</dbReference>
<dbReference type="PDB" id="2B95">
    <property type="method" value="NMR"/>
    <property type="chains" value="A/B=1-96"/>
</dbReference>
<dbReference type="PDB" id="2E8J">
    <property type="method" value="NMR"/>
    <property type="chains" value="A/B=1-96"/>
</dbReference>
<dbReference type="PDB" id="2HZ5">
    <property type="method" value="X-ray"/>
    <property type="resolution" value="2.10 A"/>
    <property type="chains" value="A/B=1-96"/>
</dbReference>
<dbReference type="PDB" id="6F1T">
    <property type="method" value="EM"/>
    <property type="resolution" value="3.50 A"/>
    <property type="chains" value="k/l/s/t=1-96"/>
</dbReference>
<dbReference type="PDB" id="6F1Z">
    <property type="method" value="EM"/>
    <property type="resolution" value="3.40 A"/>
    <property type="chains" value="s/t=1-96"/>
</dbReference>
<dbReference type="PDB" id="6F38">
    <property type="method" value="EM"/>
    <property type="resolution" value="6.70 A"/>
    <property type="chains" value="k/l/s/t=1-96"/>
</dbReference>
<dbReference type="PDB" id="6F3A">
    <property type="method" value="EM"/>
    <property type="resolution" value="8.20 A"/>
    <property type="chains" value="k/l=1-96"/>
</dbReference>
<dbReference type="PDB" id="6RLB">
    <property type="method" value="EM"/>
    <property type="resolution" value="4.50 A"/>
    <property type="chains" value="G/H=1-96"/>
</dbReference>
<dbReference type="PDB" id="6SC2">
    <property type="method" value="EM"/>
    <property type="resolution" value="3.90 A"/>
    <property type="chains" value="G/H=1-96"/>
</dbReference>
<dbReference type="PDB" id="7Z8F">
    <property type="method" value="EM"/>
    <property type="resolution" value="20.00 A"/>
    <property type="chains" value="k/l/s/t=1-96"/>
</dbReference>
<dbReference type="PDB" id="8J07">
    <property type="method" value="EM"/>
    <property type="resolution" value="4.10 A"/>
    <property type="chains" value="k4/m4/o4/q4=1-96"/>
</dbReference>
<dbReference type="PDB" id="8PR1">
    <property type="method" value="EM"/>
    <property type="resolution" value="8.20 A"/>
    <property type="chains" value="s/t=1-96"/>
</dbReference>
<dbReference type="PDB" id="8PTK">
    <property type="method" value="EM"/>
    <property type="resolution" value="10.00 A"/>
    <property type="chains" value="s/t/w/z=1-96"/>
</dbReference>
<dbReference type="PDB" id="8RGG">
    <property type="method" value="EM"/>
    <property type="resolution" value="4.00 A"/>
    <property type="chains" value="G/H=1-96"/>
</dbReference>
<dbReference type="PDB" id="8RGH">
    <property type="method" value="EM"/>
    <property type="resolution" value="3.90 A"/>
    <property type="chains" value="G/H=1-96"/>
</dbReference>
<dbReference type="PDBsum" id="1Z09"/>
<dbReference type="PDBsum" id="2B95"/>
<dbReference type="PDBsum" id="2E8J"/>
<dbReference type="PDBsum" id="2HZ5"/>
<dbReference type="PDBsum" id="6F1T"/>
<dbReference type="PDBsum" id="6F1Z"/>
<dbReference type="PDBsum" id="6F38"/>
<dbReference type="PDBsum" id="6F3A"/>
<dbReference type="PDBsum" id="6RLB"/>
<dbReference type="PDBsum" id="6SC2"/>
<dbReference type="PDBsum" id="7Z8F"/>
<dbReference type="PDBsum" id="8J07"/>
<dbReference type="PDBsum" id="8PR1"/>
<dbReference type="PDBsum" id="8PTK"/>
<dbReference type="PDBsum" id="8RGG"/>
<dbReference type="PDBsum" id="8RGH"/>
<dbReference type="BMRB" id="Q9NP97"/>
<dbReference type="EMDB" id="EMD-14549"/>
<dbReference type="EMDB" id="EMD-17831"/>
<dbReference type="EMDB" id="EMD-17873"/>
<dbReference type="EMDB" id="EMD-19132"/>
<dbReference type="EMDB" id="EMD-19133"/>
<dbReference type="EMDB" id="EMD-35888"/>
<dbReference type="EMDB" id="EMD-4168"/>
<dbReference type="EMDB" id="EMD-4172"/>
<dbReference type="EMDB" id="EMD-4177"/>
<dbReference type="EMDB" id="EMD-4918"/>
<dbReference type="SMR" id="Q9NP97"/>
<dbReference type="BioGRID" id="123715">
    <property type="interactions" value="109"/>
</dbReference>
<dbReference type="ComplexPortal" id="CPX-5025">
    <property type="entry name" value="Cytoplasmic dynein complex, variant 1"/>
</dbReference>
<dbReference type="CORUM" id="Q9NP97"/>
<dbReference type="FunCoup" id="Q9NP97">
    <property type="interactions" value="849"/>
</dbReference>
<dbReference type="IntAct" id="Q9NP97">
    <property type="interactions" value="49"/>
</dbReference>
<dbReference type="MINT" id="Q9NP97"/>
<dbReference type="STRING" id="9606.ENSP00000349679"/>
<dbReference type="iPTMnet" id="Q9NP97"/>
<dbReference type="PhosphoSitePlus" id="Q9NP97"/>
<dbReference type="BioMuta" id="DYNLRB1"/>
<dbReference type="jPOST" id="Q9NP97"/>
<dbReference type="MassIVE" id="Q9NP97"/>
<dbReference type="PaxDb" id="9606-ENSP00000349679"/>
<dbReference type="PeptideAtlas" id="Q9NP97"/>
<dbReference type="ProteomicsDB" id="81939">
    <molecule id="Q9NP97-1"/>
</dbReference>
<dbReference type="ProteomicsDB" id="81940">
    <molecule id="Q9NP97-2"/>
</dbReference>
<dbReference type="Pumba" id="Q9NP97"/>
<dbReference type="TopDownProteomics" id="Q9NP97-1">
    <molecule id="Q9NP97-1"/>
</dbReference>
<dbReference type="TopDownProteomics" id="Q9NP97-2">
    <molecule id="Q9NP97-2"/>
</dbReference>
<dbReference type="Antibodypedia" id="4076">
    <property type="antibodies" value="73 antibodies from 21 providers"/>
</dbReference>
<dbReference type="DNASU" id="83658"/>
<dbReference type="Ensembl" id="ENST00000300469.13">
    <molecule id="Q9NP97-2"/>
    <property type="protein sequence ID" value="ENSP00000300469.9"/>
    <property type="gene ID" value="ENSG00000125971.18"/>
</dbReference>
<dbReference type="Ensembl" id="ENST00000357156.7">
    <molecule id="Q9NP97-1"/>
    <property type="protein sequence ID" value="ENSP00000349679.2"/>
    <property type="gene ID" value="ENSG00000125971.18"/>
</dbReference>
<dbReference type="Ensembl" id="ENST00000480759.1">
    <molecule id="Q9NP97-2"/>
    <property type="protein sequence ID" value="ENSP00000513022.1"/>
    <property type="gene ID" value="ENSG00000125971.18"/>
</dbReference>
<dbReference type="GeneID" id="83658"/>
<dbReference type="KEGG" id="hsa:83658"/>
<dbReference type="MANE-Select" id="ENST00000357156.7">
    <property type="protein sequence ID" value="ENSP00000349679.2"/>
    <property type="RefSeq nucleotide sequence ID" value="NM_014183.4"/>
    <property type="RefSeq protein sequence ID" value="NP_054902.1"/>
</dbReference>
<dbReference type="UCSC" id="uc002xal.5">
    <molecule id="Q9NP97-1"/>
    <property type="organism name" value="human"/>
</dbReference>
<dbReference type="AGR" id="HGNC:15468"/>
<dbReference type="CTD" id="83658"/>
<dbReference type="DisGeNET" id="83658"/>
<dbReference type="GeneCards" id="DYNLRB1"/>
<dbReference type="HGNC" id="HGNC:15468">
    <property type="gene designation" value="DYNLRB1"/>
</dbReference>
<dbReference type="HPA" id="ENSG00000125971">
    <property type="expression patterns" value="Low tissue specificity"/>
</dbReference>
<dbReference type="MIM" id="607167">
    <property type="type" value="gene"/>
</dbReference>
<dbReference type="neXtProt" id="NX_Q9NP97"/>
<dbReference type="OpenTargets" id="ENSG00000125971"/>
<dbReference type="PharmGKB" id="PA27436"/>
<dbReference type="VEuPathDB" id="HostDB:ENSG00000125971"/>
<dbReference type="eggNOG" id="KOG4115">
    <property type="taxonomic scope" value="Eukaryota"/>
</dbReference>
<dbReference type="GeneTree" id="ENSGT00390000011067"/>
<dbReference type="HOGENOM" id="CLU_113002_3_2_1"/>
<dbReference type="InParanoid" id="Q9NP97"/>
<dbReference type="OMA" id="NNSTIEY"/>
<dbReference type="OrthoDB" id="9985637at2759"/>
<dbReference type="PAN-GO" id="Q9NP97">
    <property type="GO annotations" value="5 GO annotations based on evolutionary models"/>
</dbReference>
<dbReference type="PhylomeDB" id="Q9NP97"/>
<dbReference type="TreeFam" id="TF315165"/>
<dbReference type="PathwayCommons" id="Q9NP97"/>
<dbReference type="Reactome" id="R-HSA-5620924">
    <property type="pathway name" value="Intraflagellar transport"/>
</dbReference>
<dbReference type="SignaLink" id="Q9NP97"/>
<dbReference type="SIGNOR" id="Q9NP97"/>
<dbReference type="BioGRID-ORCS" id="83658">
    <property type="hits" value="792 hits in 1128 CRISPR screens"/>
</dbReference>
<dbReference type="CD-CODE" id="8C2F96ED">
    <property type="entry name" value="Centrosome"/>
</dbReference>
<dbReference type="CD-CODE" id="FB4E32DD">
    <property type="entry name" value="Presynaptic clusters and postsynaptic densities"/>
</dbReference>
<dbReference type="ChiTaRS" id="DYNLRB1">
    <property type="organism name" value="human"/>
</dbReference>
<dbReference type="EvolutionaryTrace" id="Q9NP97"/>
<dbReference type="GeneWiki" id="DYNLRB1"/>
<dbReference type="GenomeRNAi" id="83658"/>
<dbReference type="Pharos" id="Q9NP97">
    <property type="development level" value="Tbio"/>
</dbReference>
<dbReference type="PRO" id="PR:Q9NP97"/>
<dbReference type="Proteomes" id="UP000005640">
    <property type="component" value="Chromosome 20"/>
</dbReference>
<dbReference type="RNAct" id="Q9NP97">
    <property type="molecule type" value="protein"/>
</dbReference>
<dbReference type="Bgee" id="ENSG00000125971">
    <property type="expression patterns" value="Expressed in Brodmann (1909) area 9 and 95 other cell types or tissues"/>
</dbReference>
<dbReference type="ExpressionAtlas" id="Q9NP97">
    <property type="expression patterns" value="baseline and differential"/>
</dbReference>
<dbReference type="GO" id="GO:0005813">
    <property type="term" value="C:centrosome"/>
    <property type="evidence" value="ECO:0000314"/>
    <property type="project" value="UniProtKB"/>
</dbReference>
<dbReference type="GO" id="GO:0097542">
    <property type="term" value="C:ciliary tip"/>
    <property type="evidence" value="ECO:0000304"/>
    <property type="project" value="Reactome"/>
</dbReference>
<dbReference type="GO" id="GO:0005929">
    <property type="term" value="C:cilium"/>
    <property type="evidence" value="ECO:0000304"/>
    <property type="project" value="Reactome"/>
</dbReference>
<dbReference type="GO" id="GO:0005737">
    <property type="term" value="C:cytoplasm"/>
    <property type="evidence" value="ECO:0000250"/>
    <property type="project" value="UniProtKB"/>
</dbReference>
<dbReference type="GO" id="GO:0005868">
    <property type="term" value="C:cytoplasmic dynein complex"/>
    <property type="evidence" value="ECO:0000250"/>
    <property type="project" value="UniProtKB"/>
</dbReference>
<dbReference type="GO" id="GO:0030286">
    <property type="term" value="C:dynein complex"/>
    <property type="evidence" value="ECO:0000353"/>
    <property type="project" value="ComplexPortal"/>
</dbReference>
<dbReference type="GO" id="GO:0016020">
    <property type="term" value="C:membrane"/>
    <property type="evidence" value="ECO:0007005"/>
    <property type="project" value="UniProtKB"/>
</dbReference>
<dbReference type="GO" id="GO:0005874">
    <property type="term" value="C:microtubule"/>
    <property type="evidence" value="ECO:0007669"/>
    <property type="project" value="UniProtKB-KW"/>
</dbReference>
<dbReference type="GO" id="GO:0045505">
    <property type="term" value="F:dynein intermediate chain binding"/>
    <property type="evidence" value="ECO:0000318"/>
    <property type="project" value="GO_Central"/>
</dbReference>
<dbReference type="GO" id="GO:0042802">
    <property type="term" value="F:identical protein binding"/>
    <property type="evidence" value="ECO:0007669"/>
    <property type="project" value="Ensembl"/>
</dbReference>
<dbReference type="GO" id="GO:0003777">
    <property type="term" value="F:microtubule motor activity"/>
    <property type="evidence" value="ECO:0000303"/>
    <property type="project" value="UniProtKB"/>
</dbReference>
<dbReference type="GO" id="GO:0007018">
    <property type="term" value="P:microtubule-based movement"/>
    <property type="evidence" value="ECO:0000318"/>
    <property type="project" value="GO_Central"/>
</dbReference>
<dbReference type="GO" id="GO:0007632">
    <property type="term" value="P:visual behavior"/>
    <property type="evidence" value="ECO:0000250"/>
    <property type="project" value="UniProtKB"/>
</dbReference>
<dbReference type="FunFam" id="3.30.450.30:FF:000002">
    <property type="entry name" value="Dynein light chain roadblock"/>
    <property type="match status" value="1"/>
</dbReference>
<dbReference type="Gene3D" id="3.30.450.30">
    <property type="entry name" value="Dynein light chain 2a, cytoplasmic"/>
    <property type="match status" value="1"/>
</dbReference>
<dbReference type="InterPro" id="IPR016561">
    <property type="entry name" value="DYNLRB1/2"/>
</dbReference>
<dbReference type="InterPro" id="IPR004942">
    <property type="entry name" value="Roadblock/LAMTOR2_dom"/>
</dbReference>
<dbReference type="PANTHER" id="PTHR10779">
    <property type="entry name" value="DYNEIN LIGHT CHAIN ROADBLOCK"/>
    <property type="match status" value="1"/>
</dbReference>
<dbReference type="Pfam" id="PF03259">
    <property type="entry name" value="Robl_LC7"/>
    <property type="match status" value="1"/>
</dbReference>
<dbReference type="PIRSF" id="PIRSF009998">
    <property type="entry name" value="DLC7"/>
    <property type="match status" value="1"/>
</dbReference>
<dbReference type="SMART" id="SM00960">
    <property type="entry name" value="Robl_LC7"/>
    <property type="match status" value="1"/>
</dbReference>
<dbReference type="SUPFAM" id="SSF103196">
    <property type="entry name" value="Roadblock/LC7 domain"/>
    <property type="match status" value="1"/>
</dbReference>
<organism>
    <name type="scientific">Homo sapiens</name>
    <name type="common">Human</name>
    <dbReference type="NCBI Taxonomy" id="9606"/>
    <lineage>
        <taxon>Eukaryota</taxon>
        <taxon>Metazoa</taxon>
        <taxon>Chordata</taxon>
        <taxon>Craniata</taxon>
        <taxon>Vertebrata</taxon>
        <taxon>Euteleostomi</taxon>
        <taxon>Mammalia</taxon>
        <taxon>Eutheria</taxon>
        <taxon>Euarchontoglires</taxon>
        <taxon>Primates</taxon>
        <taxon>Haplorrhini</taxon>
        <taxon>Catarrhini</taxon>
        <taxon>Hominidae</taxon>
        <taxon>Homo</taxon>
    </lineage>
</organism>
<comment type="function">
    <text evidence="12">Acts as one of several non-catalytic accessory components of the cytoplasmic dynein 1 complex that are thought to be involved in linking dynein to cargos and to adapter proteins that regulate dynein function. Cytoplasmic dynein 1 acts as a motor for the intracellular retrograde motility of vesicles and organelles along microtubules.</text>
</comment>
<comment type="subunit">
    <text evidence="3 5 6 7 8 9">Homodimer. The cytoplasmic dynein 1 complex consists of two catalytic heavy chains (HCs) and a number of non-catalytic subunits presented by intermediate chains (ICs), light intermediate chains (LICs) and light chains (LCs); the composition seems to vary in respect to the IC, LIC and LC composition. The heavy chain homodimer serves as a scaffold for the probable homodimeric assembly of the respective non-catalytic subunits. The ICs and LICs bind directly to the HC dimer and the LCs assemble on the IC dimer (PubMed:16083906, PubMed:16970917, PubMed:29420470, PubMed:36071160). Interacts with DYNLRB2. Interacts with DYNC1I1 and DYNC1I2 (PubMed:12077152). Interacts with RAB6A isoform 1 (GTP-bound); the interaction is direct. Interacts with RAB6A isoform 2 (GDP-bound); the interaction is direct. Interacts with RAB6B (GDP-bound) (PubMed:18044744).</text>
</comment>
<comment type="interaction">
    <interactant intactId="EBI-372128">
        <id>Q9NP97</id>
    </interactant>
    <interactant intactId="EBI-12880830">
        <id>O75575-2</id>
        <label>CRCP</label>
    </interactant>
    <organismsDiffer>false</organismsDiffer>
    <experiments>3</experiments>
</comment>
<comment type="interaction">
    <interactant intactId="EBI-372128">
        <id>Q9NP97</id>
    </interactant>
    <interactant intactId="EBI-366267">
        <id>O14576</id>
        <label>DYNC1I1</label>
    </interactant>
    <organismsDiffer>false</organismsDiffer>
    <experiments>3</experiments>
</comment>
<comment type="interaction">
    <interactant intactId="EBI-372128">
        <id>Q9NP97</id>
    </interactant>
    <interactant intactId="EBI-742998">
        <id>Q13409</id>
        <label>DYNC1I2</label>
    </interactant>
    <organismsDiffer>false</organismsDiffer>
    <experiments>6</experiments>
</comment>
<comment type="interaction">
    <interactant intactId="EBI-372128">
        <id>Q9NP97</id>
    </interactant>
    <interactant intactId="EBI-5650739">
        <id>P43356</id>
        <label>MAGEA2B</label>
    </interactant>
    <organismsDiffer>false</organismsDiffer>
    <experiments>3</experiments>
</comment>
<comment type="subcellular location">
    <subcellularLocation>
        <location evidence="12">Cytoplasm</location>
        <location evidence="12">Cytoskeleton</location>
    </subcellularLocation>
</comment>
<comment type="alternative products">
    <event type="alternative splicing"/>
    <isoform>
        <id>Q9NP97-1</id>
        <name>1</name>
        <sequence type="displayed"/>
    </isoform>
    <isoform>
        <id>Q9NP97-2</id>
        <name>2</name>
        <sequence type="described" ref="VSP_007236 VSP_007237"/>
    </isoform>
    <text>Additional isoforms seem to exist.</text>
</comment>
<comment type="tissue specificity">
    <text evidence="2">High expression in heart, liver, brain and pancreas; moderate in placenta, skeletal muscle and kidney; low in lung, prostate, testis, small intestine and colon. Isoform 1 expression is up-regulated in 64% hepatocellular carcinoma (HCC) patients.</text>
</comment>
<comment type="miscellaneous">
    <molecule>Isoform 2</molecule>
    <text evidence="11">May result from the retention of an intron in the cDNA.</text>
</comment>
<comment type="similarity">
    <text evidence="11">Belongs to the GAMAD family.</text>
</comment>